<sequence length="675" mass="74048">MSEIPEKVRKRVASLRDELDYHNHRYYVLDDPEIPDAAYDALMRELQDLEAKYPELVTPDSPTQRVGGAPLKAFEEARHLLPMLSLDNAFEEADVLAFEKRIRDRLGEESEIEFAVEPKLDGLAISLLYEDGHLVRGATRGDGATGEDVTANVRTIRAIPLRLQGRGWPKLLEVRGEVYMDRAGFEAFNREAASRGEKVFVNPRNAAAGSLRQLDSRITAKRPLTFFAYGAGHVEGGELPDTHAAVLDALAEWGQRVCPERDVVTGAAGCLEYYRRIGERRDGLPYDIDGVVYKVNRFELQQRLGFVSRAPRWAIAHKYPAQEQMTLLRDVEFQVGRTGALTPVARLEPVFVGGVTVSNATLHNMDEVERKDVRIGDTVIVRRAGDVIPEVAAVVLSRRPHNARHVVMPTHCPVCGSEIVRSEGEAVARCSGGLYCAAQRREAIKHFASRRAMDIEGLGDKLVEQLVDAGLVDHVDGLYRLTAEQLAGLERMGEKSAHNLVDALEKSKHTQLARFIFALGIREVGEATARALAIHFGGLDALMAADEEALMQVPDVGPVVAHHVATFFQQPHNREVIDALREAGVHWEESEPAALQAEDLPLSGNTYVLTGALESMTREEAGDRLMALGAKVSGSVSKKTTAVIAGEAAGSKLAKAEKLGVPVLSEAEFLELIGE</sequence>
<accession>B8GTL0</accession>
<reference key="1">
    <citation type="journal article" date="2011" name="Stand. Genomic Sci.">
        <title>Complete genome sequence of 'Thioalkalivibrio sulfidophilus' HL-EbGr7.</title>
        <authorList>
            <person name="Muyzer G."/>
            <person name="Sorokin D.Y."/>
            <person name="Mavromatis K."/>
            <person name="Lapidus A."/>
            <person name="Clum A."/>
            <person name="Ivanova N."/>
            <person name="Pati A."/>
            <person name="d'Haeseleer P."/>
            <person name="Woyke T."/>
            <person name="Kyrpides N.C."/>
        </authorList>
    </citation>
    <scope>NUCLEOTIDE SEQUENCE [LARGE SCALE GENOMIC DNA]</scope>
    <source>
        <strain>HL-EbGR7</strain>
    </source>
</reference>
<comment type="function">
    <text evidence="1">DNA ligase that catalyzes the formation of phosphodiester linkages between 5'-phosphoryl and 3'-hydroxyl groups in double-stranded DNA using NAD as a coenzyme and as the energy source for the reaction. It is essential for DNA replication and repair of damaged DNA.</text>
</comment>
<comment type="catalytic activity">
    <reaction evidence="1">
        <text>NAD(+) + (deoxyribonucleotide)n-3'-hydroxyl + 5'-phospho-(deoxyribonucleotide)m = (deoxyribonucleotide)n+m + AMP + beta-nicotinamide D-nucleotide.</text>
        <dbReference type="EC" id="6.5.1.2"/>
    </reaction>
</comment>
<comment type="cofactor">
    <cofactor evidence="1">
        <name>Mg(2+)</name>
        <dbReference type="ChEBI" id="CHEBI:18420"/>
    </cofactor>
    <cofactor evidence="1">
        <name>Mn(2+)</name>
        <dbReference type="ChEBI" id="CHEBI:29035"/>
    </cofactor>
</comment>
<comment type="similarity">
    <text evidence="1">Belongs to the NAD-dependent DNA ligase family. LigA subfamily.</text>
</comment>
<keyword id="KW-0227">DNA damage</keyword>
<keyword id="KW-0234">DNA repair</keyword>
<keyword id="KW-0235">DNA replication</keyword>
<keyword id="KW-0436">Ligase</keyword>
<keyword id="KW-0460">Magnesium</keyword>
<keyword id="KW-0464">Manganese</keyword>
<keyword id="KW-0479">Metal-binding</keyword>
<keyword id="KW-0520">NAD</keyword>
<keyword id="KW-1185">Reference proteome</keyword>
<keyword id="KW-0862">Zinc</keyword>
<name>DNLJ_THISH</name>
<dbReference type="EC" id="6.5.1.2" evidence="1"/>
<dbReference type="EMBL" id="CP001339">
    <property type="protein sequence ID" value="ACL73104.1"/>
    <property type="molecule type" value="Genomic_DNA"/>
</dbReference>
<dbReference type="RefSeq" id="WP_012638583.1">
    <property type="nucleotide sequence ID" value="NC_011901.1"/>
</dbReference>
<dbReference type="SMR" id="B8GTL0"/>
<dbReference type="STRING" id="396588.Tgr7_2024"/>
<dbReference type="KEGG" id="tgr:Tgr7_2024"/>
<dbReference type="eggNOG" id="COG0272">
    <property type="taxonomic scope" value="Bacteria"/>
</dbReference>
<dbReference type="HOGENOM" id="CLU_007764_2_1_6"/>
<dbReference type="OrthoDB" id="9759736at2"/>
<dbReference type="Proteomes" id="UP000002383">
    <property type="component" value="Chromosome"/>
</dbReference>
<dbReference type="GO" id="GO:0005829">
    <property type="term" value="C:cytosol"/>
    <property type="evidence" value="ECO:0007669"/>
    <property type="project" value="TreeGrafter"/>
</dbReference>
<dbReference type="GO" id="GO:0003677">
    <property type="term" value="F:DNA binding"/>
    <property type="evidence" value="ECO:0007669"/>
    <property type="project" value="InterPro"/>
</dbReference>
<dbReference type="GO" id="GO:0003911">
    <property type="term" value="F:DNA ligase (NAD+) activity"/>
    <property type="evidence" value="ECO:0007669"/>
    <property type="project" value="UniProtKB-UniRule"/>
</dbReference>
<dbReference type="GO" id="GO:0046872">
    <property type="term" value="F:metal ion binding"/>
    <property type="evidence" value="ECO:0007669"/>
    <property type="project" value="UniProtKB-KW"/>
</dbReference>
<dbReference type="GO" id="GO:0006281">
    <property type="term" value="P:DNA repair"/>
    <property type="evidence" value="ECO:0007669"/>
    <property type="project" value="UniProtKB-KW"/>
</dbReference>
<dbReference type="GO" id="GO:0006260">
    <property type="term" value="P:DNA replication"/>
    <property type="evidence" value="ECO:0007669"/>
    <property type="project" value="UniProtKB-KW"/>
</dbReference>
<dbReference type="CDD" id="cd17748">
    <property type="entry name" value="BRCT_DNA_ligase_like"/>
    <property type="match status" value="1"/>
</dbReference>
<dbReference type="CDD" id="cd00114">
    <property type="entry name" value="LIGANc"/>
    <property type="match status" value="1"/>
</dbReference>
<dbReference type="FunFam" id="1.10.150.20:FF:000006">
    <property type="entry name" value="DNA ligase"/>
    <property type="match status" value="1"/>
</dbReference>
<dbReference type="FunFam" id="1.10.150.20:FF:000007">
    <property type="entry name" value="DNA ligase"/>
    <property type="match status" value="1"/>
</dbReference>
<dbReference type="FunFam" id="1.10.287.610:FF:000002">
    <property type="entry name" value="DNA ligase"/>
    <property type="match status" value="1"/>
</dbReference>
<dbReference type="FunFam" id="2.40.50.140:FF:000012">
    <property type="entry name" value="DNA ligase"/>
    <property type="match status" value="1"/>
</dbReference>
<dbReference type="FunFam" id="3.30.470.30:FF:000001">
    <property type="entry name" value="DNA ligase"/>
    <property type="match status" value="1"/>
</dbReference>
<dbReference type="FunFam" id="6.20.10.30:FF:000001">
    <property type="entry name" value="DNA ligase"/>
    <property type="match status" value="1"/>
</dbReference>
<dbReference type="Gene3D" id="6.20.10.30">
    <property type="match status" value="1"/>
</dbReference>
<dbReference type="Gene3D" id="1.10.150.20">
    <property type="entry name" value="5' to 3' exonuclease, C-terminal subdomain"/>
    <property type="match status" value="2"/>
</dbReference>
<dbReference type="Gene3D" id="3.40.50.10190">
    <property type="entry name" value="BRCT domain"/>
    <property type="match status" value="1"/>
</dbReference>
<dbReference type="Gene3D" id="3.30.470.30">
    <property type="entry name" value="DNA ligase/mRNA capping enzyme"/>
    <property type="match status" value="1"/>
</dbReference>
<dbReference type="Gene3D" id="1.10.287.610">
    <property type="entry name" value="Helix hairpin bin"/>
    <property type="match status" value="1"/>
</dbReference>
<dbReference type="Gene3D" id="2.40.50.140">
    <property type="entry name" value="Nucleic acid-binding proteins"/>
    <property type="match status" value="1"/>
</dbReference>
<dbReference type="HAMAP" id="MF_01588">
    <property type="entry name" value="DNA_ligase_A"/>
    <property type="match status" value="1"/>
</dbReference>
<dbReference type="InterPro" id="IPR001357">
    <property type="entry name" value="BRCT_dom"/>
</dbReference>
<dbReference type="InterPro" id="IPR036420">
    <property type="entry name" value="BRCT_dom_sf"/>
</dbReference>
<dbReference type="InterPro" id="IPR041663">
    <property type="entry name" value="DisA/LigA_HHH"/>
</dbReference>
<dbReference type="InterPro" id="IPR001679">
    <property type="entry name" value="DNA_ligase"/>
</dbReference>
<dbReference type="InterPro" id="IPR018239">
    <property type="entry name" value="DNA_ligase_AS"/>
</dbReference>
<dbReference type="InterPro" id="IPR033136">
    <property type="entry name" value="DNA_ligase_CS"/>
</dbReference>
<dbReference type="InterPro" id="IPR013839">
    <property type="entry name" value="DNAligase_adenylation"/>
</dbReference>
<dbReference type="InterPro" id="IPR013840">
    <property type="entry name" value="DNAligase_N"/>
</dbReference>
<dbReference type="InterPro" id="IPR003583">
    <property type="entry name" value="Hlx-hairpin-Hlx_DNA-bd_motif"/>
</dbReference>
<dbReference type="InterPro" id="IPR012340">
    <property type="entry name" value="NA-bd_OB-fold"/>
</dbReference>
<dbReference type="InterPro" id="IPR004150">
    <property type="entry name" value="NAD_DNA_ligase_OB"/>
</dbReference>
<dbReference type="InterPro" id="IPR010994">
    <property type="entry name" value="RuvA_2-like"/>
</dbReference>
<dbReference type="InterPro" id="IPR004149">
    <property type="entry name" value="Znf_DNAligase_C4"/>
</dbReference>
<dbReference type="NCBIfam" id="TIGR00575">
    <property type="entry name" value="dnlj"/>
    <property type="match status" value="1"/>
</dbReference>
<dbReference type="NCBIfam" id="NF005932">
    <property type="entry name" value="PRK07956.1"/>
    <property type="match status" value="1"/>
</dbReference>
<dbReference type="PANTHER" id="PTHR23389">
    <property type="entry name" value="CHROMOSOME TRANSMISSION FIDELITY FACTOR 18"/>
    <property type="match status" value="1"/>
</dbReference>
<dbReference type="PANTHER" id="PTHR23389:SF9">
    <property type="entry name" value="DNA LIGASE"/>
    <property type="match status" value="1"/>
</dbReference>
<dbReference type="Pfam" id="PF00533">
    <property type="entry name" value="BRCT"/>
    <property type="match status" value="1"/>
</dbReference>
<dbReference type="Pfam" id="PF01653">
    <property type="entry name" value="DNA_ligase_aden"/>
    <property type="match status" value="1"/>
</dbReference>
<dbReference type="Pfam" id="PF03120">
    <property type="entry name" value="DNA_ligase_OB"/>
    <property type="match status" value="1"/>
</dbReference>
<dbReference type="Pfam" id="PF03119">
    <property type="entry name" value="DNA_ligase_ZBD"/>
    <property type="match status" value="1"/>
</dbReference>
<dbReference type="Pfam" id="PF12826">
    <property type="entry name" value="HHH_2"/>
    <property type="match status" value="1"/>
</dbReference>
<dbReference type="Pfam" id="PF14520">
    <property type="entry name" value="HHH_5"/>
    <property type="match status" value="1"/>
</dbReference>
<dbReference type="Pfam" id="PF22745">
    <property type="entry name" value="Nlig-Ia"/>
    <property type="match status" value="1"/>
</dbReference>
<dbReference type="PIRSF" id="PIRSF001604">
    <property type="entry name" value="LigA"/>
    <property type="match status" value="1"/>
</dbReference>
<dbReference type="SMART" id="SM00292">
    <property type="entry name" value="BRCT"/>
    <property type="match status" value="1"/>
</dbReference>
<dbReference type="SMART" id="SM00278">
    <property type="entry name" value="HhH1"/>
    <property type="match status" value="4"/>
</dbReference>
<dbReference type="SMART" id="SM00532">
    <property type="entry name" value="LIGANc"/>
    <property type="match status" value="1"/>
</dbReference>
<dbReference type="SUPFAM" id="SSF52113">
    <property type="entry name" value="BRCT domain"/>
    <property type="match status" value="1"/>
</dbReference>
<dbReference type="SUPFAM" id="SSF56091">
    <property type="entry name" value="DNA ligase/mRNA capping enzyme, catalytic domain"/>
    <property type="match status" value="1"/>
</dbReference>
<dbReference type="SUPFAM" id="SSF50249">
    <property type="entry name" value="Nucleic acid-binding proteins"/>
    <property type="match status" value="1"/>
</dbReference>
<dbReference type="SUPFAM" id="SSF47781">
    <property type="entry name" value="RuvA domain 2-like"/>
    <property type="match status" value="1"/>
</dbReference>
<dbReference type="PROSITE" id="PS50172">
    <property type="entry name" value="BRCT"/>
    <property type="match status" value="1"/>
</dbReference>
<dbReference type="PROSITE" id="PS01055">
    <property type="entry name" value="DNA_LIGASE_N1"/>
    <property type="match status" value="1"/>
</dbReference>
<dbReference type="PROSITE" id="PS01056">
    <property type="entry name" value="DNA_LIGASE_N2"/>
    <property type="match status" value="1"/>
</dbReference>
<gene>
    <name evidence="1" type="primary">ligA</name>
    <name type="ordered locus">Tgr7_2024</name>
</gene>
<organism>
    <name type="scientific">Thioalkalivibrio sulfidiphilus (strain HL-EbGR7)</name>
    <dbReference type="NCBI Taxonomy" id="396588"/>
    <lineage>
        <taxon>Bacteria</taxon>
        <taxon>Pseudomonadati</taxon>
        <taxon>Pseudomonadota</taxon>
        <taxon>Gammaproteobacteria</taxon>
        <taxon>Chromatiales</taxon>
        <taxon>Ectothiorhodospiraceae</taxon>
        <taxon>Thioalkalivibrio</taxon>
    </lineage>
</organism>
<feature type="chain" id="PRO_0000380499" description="DNA ligase">
    <location>
        <begin position="1"/>
        <end position="675"/>
    </location>
</feature>
<feature type="domain" description="BRCT" evidence="1">
    <location>
        <begin position="597"/>
        <end position="675"/>
    </location>
</feature>
<feature type="active site" description="N6-AMP-lysine intermediate" evidence="1">
    <location>
        <position position="119"/>
    </location>
</feature>
<feature type="binding site" evidence="1">
    <location>
        <begin position="36"/>
        <end position="40"/>
    </location>
    <ligand>
        <name>NAD(+)</name>
        <dbReference type="ChEBI" id="CHEBI:57540"/>
    </ligand>
</feature>
<feature type="binding site" evidence="1">
    <location>
        <begin position="85"/>
        <end position="86"/>
    </location>
    <ligand>
        <name>NAD(+)</name>
        <dbReference type="ChEBI" id="CHEBI:57540"/>
    </ligand>
</feature>
<feature type="binding site" evidence="1">
    <location>
        <position position="117"/>
    </location>
    <ligand>
        <name>NAD(+)</name>
        <dbReference type="ChEBI" id="CHEBI:57540"/>
    </ligand>
</feature>
<feature type="binding site" evidence="1">
    <location>
        <position position="140"/>
    </location>
    <ligand>
        <name>NAD(+)</name>
        <dbReference type="ChEBI" id="CHEBI:57540"/>
    </ligand>
</feature>
<feature type="binding site" evidence="1">
    <location>
        <position position="177"/>
    </location>
    <ligand>
        <name>NAD(+)</name>
        <dbReference type="ChEBI" id="CHEBI:57540"/>
    </ligand>
</feature>
<feature type="binding site" evidence="1">
    <location>
        <position position="294"/>
    </location>
    <ligand>
        <name>NAD(+)</name>
        <dbReference type="ChEBI" id="CHEBI:57540"/>
    </ligand>
</feature>
<feature type="binding site" evidence="1">
    <location>
        <position position="318"/>
    </location>
    <ligand>
        <name>NAD(+)</name>
        <dbReference type="ChEBI" id="CHEBI:57540"/>
    </ligand>
</feature>
<feature type="binding site" evidence="1">
    <location>
        <position position="412"/>
    </location>
    <ligand>
        <name>Zn(2+)</name>
        <dbReference type="ChEBI" id="CHEBI:29105"/>
    </ligand>
</feature>
<feature type="binding site" evidence="1">
    <location>
        <position position="415"/>
    </location>
    <ligand>
        <name>Zn(2+)</name>
        <dbReference type="ChEBI" id="CHEBI:29105"/>
    </ligand>
</feature>
<feature type="binding site" evidence="1">
    <location>
        <position position="430"/>
    </location>
    <ligand>
        <name>Zn(2+)</name>
        <dbReference type="ChEBI" id="CHEBI:29105"/>
    </ligand>
</feature>
<feature type="binding site" evidence="1">
    <location>
        <position position="436"/>
    </location>
    <ligand>
        <name>Zn(2+)</name>
        <dbReference type="ChEBI" id="CHEBI:29105"/>
    </ligand>
</feature>
<evidence type="ECO:0000255" key="1">
    <source>
        <dbReference type="HAMAP-Rule" id="MF_01588"/>
    </source>
</evidence>
<proteinExistence type="inferred from homology"/>
<protein>
    <recommendedName>
        <fullName evidence="1">DNA ligase</fullName>
        <ecNumber evidence="1">6.5.1.2</ecNumber>
    </recommendedName>
    <alternativeName>
        <fullName evidence="1">Polydeoxyribonucleotide synthase [NAD(+)]</fullName>
    </alternativeName>
</protein>